<accession>Q4FRK8</accession>
<keyword id="KW-0963">Cytoplasm</keyword>
<keyword id="KW-0210">Decarboxylase</keyword>
<keyword id="KW-0456">Lyase</keyword>
<keyword id="KW-0627">Porphyrin biosynthesis</keyword>
<keyword id="KW-1185">Reference proteome</keyword>
<sequence>MSASDNNNSLEKNFAPLKNDRLLRALRFEPIDTTPVWMMRQAGRYLPEYKATRAEAGDFMSLCKDTARATEVTLQPLRRYDLDAAILFSDILTIPDAMGLGLYFEAGEGPKFKHPIRQQADLDRLPVLDVNDSLDYVMRAVTSIRTALNGQVPLFGFSGSPWTLATYMIEGGSSKDYRYTKGFLYSNPEFLHQLLDKLATSVIDYLDAQVVAGAQILQIFDSWGGALGHRQFVDFSHAYNKRIVAELKVRHPEIPVVLFTKGGGLWLDIQADSEADALGLDWTMPIDRARQVLTESQRQLTKQHKKLHSSKAIQGNLDPATLYGSPATIRAEVNAMLDSAYANGEKTGYVANLGHGITQWVNPDNAKVFIDAVHDYKI</sequence>
<comment type="function">
    <text evidence="1">Catalyzes the decarboxylation of four acetate groups of uroporphyrinogen-III to yield coproporphyrinogen-III.</text>
</comment>
<comment type="catalytic activity">
    <reaction evidence="1">
        <text>uroporphyrinogen III + 4 H(+) = coproporphyrinogen III + 4 CO2</text>
        <dbReference type="Rhea" id="RHEA:19865"/>
        <dbReference type="ChEBI" id="CHEBI:15378"/>
        <dbReference type="ChEBI" id="CHEBI:16526"/>
        <dbReference type="ChEBI" id="CHEBI:57308"/>
        <dbReference type="ChEBI" id="CHEBI:57309"/>
        <dbReference type="EC" id="4.1.1.37"/>
    </reaction>
</comment>
<comment type="pathway">
    <text evidence="1">Porphyrin-containing compound metabolism; protoporphyrin-IX biosynthesis; coproporphyrinogen-III from 5-aminolevulinate: step 4/4.</text>
</comment>
<comment type="subunit">
    <text evidence="1">Homodimer.</text>
</comment>
<comment type="subcellular location">
    <subcellularLocation>
        <location evidence="1">Cytoplasm</location>
    </subcellularLocation>
</comment>
<comment type="similarity">
    <text evidence="1">Belongs to the uroporphyrinogen decarboxylase family.</text>
</comment>
<evidence type="ECO:0000255" key="1">
    <source>
        <dbReference type="HAMAP-Rule" id="MF_00218"/>
    </source>
</evidence>
<gene>
    <name evidence="1" type="primary">hemE</name>
    <name type="ordered locus">Psyc_1502</name>
</gene>
<name>DCUP_PSYA2</name>
<reference key="1">
    <citation type="journal article" date="2010" name="Appl. Environ. Microbiol.">
        <title>The genome sequence of Psychrobacter arcticus 273-4, a psychroactive Siberian permafrost bacterium, reveals mechanisms for adaptation to low-temperature growth.</title>
        <authorList>
            <person name="Ayala-del-Rio H.L."/>
            <person name="Chain P.S."/>
            <person name="Grzymski J.J."/>
            <person name="Ponder M.A."/>
            <person name="Ivanova N."/>
            <person name="Bergholz P.W."/>
            <person name="Di Bartolo G."/>
            <person name="Hauser L."/>
            <person name="Land M."/>
            <person name="Bakermans C."/>
            <person name="Rodrigues D."/>
            <person name="Klappenbach J."/>
            <person name="Zarka D."/>
            <person name="Larimer F."/>
            <person name="Richardson P."/>
            <person name="Murray A."/>
            <person name="Thomashow M."/>
            <person name="Tiedje J.M."/>
        </authorList>
    </citation>
    <scope>NUCLEOTIDE SEQUENCE [LARGE SCALE GENOMIC DNA]</scope>
    <source>
        <strain>DSM 17307 / VKM B-2377 / 273-4</strain>
    </source>
</reference>
<dbReference type="EC" id="4.1.1.37" evidence="1"/>
<dbReference type="EMBL" id="CP000082">
    <property type="protein sequence ID" value="AAZ19350.1"/>
    <property type="molecule type" value="Genomic_DNA"/>
</dbReference>
<dbReference type="RefSeq" id="WP_011280767.1">
    <property type="nucleotide sequence ID" value="NC_007204.1"/>
</dbReference>
<dbReference type="SMR" id="Q4FRK8"/>
<dbReference type="STRING" id="259536.Psyc_1502"/>
<dbReference type="KEGG" id="par:Psyc_1502"/>
<dbReference type="eggNOG" id="COG0407">
    <property type="taxonomic scope" value="Bacteria"/>
</dbReference>
<dbReference type="HOGENOM" id="CLU_040933_0_0_6"/>
<dbReference type="OrthoDB" id="9806656at2"/>
<dbReference type="UniPathway" id="UPA00251">
    <property type="reaction ID" value="UER00321"/>
</dbReference>
<dbReference type="Proteomes" id="UP000000546">
    <property type="component" value="Chromosome"/>
</dbReference>
<dbReference type="GO" id="GO:0005829">
    <property type="term" value="C:cytosol"/>
    <property type="evidence" value="ECO:0007669"/>
    <property type="project" value="TreeGrafter"/>
</dbReference>
<dbReference type="GO" id="GO:0004853">
    <property type="term" value="F:uroporphyrinogen decarboxylase activity"/>
    <property type="evidence" value="ECO:0007669"/>
    <property type="project" value="UniProtKB-UniRule"/>
</dbReference>
<dbReference type="GO" id="GO:0019353">
    <property type="term" value="P:protoporphyrinogen IX biosynthetic process from glutamate"/>
    <property type="evidence" value="ECO:0007669"/>
    <property type="project" value="TreeGrafter"/>
</dbReference>
<dbReference type="CDD" id="cd00717">
    <property type="entry name" value="URO-D"/>
    <property type="match status" value="1"/>
</dbReference>
<dbReference type="FunFam" id="3.20.20.210:FF:000001">
    <property type="entry name" value="Uroporphyrinogen decarboxylase"/>
    <property type="match status" value="1"/>
</dbReference>
<dbReference type="Gene3D" id="3.20.20.210">
    <property type="match status" value="1"/>
</dbReference>
<dbReference type="HAMAP" id="MF_00218">
    <property type="entry name" value="URO_D"/>
    <property type="match status" value="1"/>
</dbReference>
<dbReference type="InterPro" id="IPR038071">
    <property type="entry name" value="UROD/MetE-like_sf"/>
</dbReference>
<dbReference type="InterPro" id="IPR006361">
    <property type="entry name" value="Uroporphyrinogen_deCO2ase_HemE"/>
</dbReference>
<dbReference type="InterPro" id="IPR000257">
    <property type="entry name" value="Uroporphyrinogen_deCOase"/>
</dbReference>
<dbReference type="NCBIfam" id="TIGR01464">
    <property type="entry name" value="hemE"/>
    <property type="match status" value="1"/>
</dbReference>
<dbReference type="PANTHER" id="PTHR21091">
    <property type="entry name" value="METHYLTETRAHYDROFOLATE:HOMOCYSTEINE METHYLTRANSFERASE RELATED"/>
    <property type="match status" value="1"/>
</dbReference>
<dbReference type="PANTHER" id="PTHR21091:SF169">
    <property type="entry name" value="UROPORPHYRINOGEN DECARBOXYLASE"/>
    <property type="match status" value="1"/>
</dbReference>
<dbReference type="Pfam" id="PF01208">
    <property type="entry name" value="URO-D"/>
    <property type="match status" value="1"/>
</dbReference>
<dbReference type="SUPFAM" id="SSF51726">
    <property type="entry name" value="UROD/MetE-like"/>
    <property type="match status" value="1"/>
</dbReference>
<dbReference type="PROSITE" id="PS00906">
    <property type="entry name" value="UROD_1"/>
    <property type="match status" value="1"/>
</dbReference>
<dbReference type="PROSITE" id="PS00907">
    <property type="entry name" value="UROD_2"/>
    <property type="match status" value="1"/>
</dbReference>
<feature type="chain" id="PRO_0000325676" description="Uroporphyrinogen decarboxylase">
    <location>
        <begin position="1"/>
        <end position="378"/>
    </location>
</feature>
<feature type="binding site" evidence="1">
    <location>
        <begin position="40"/>
        <end position="44"/>
    </location>
    <ligand>
        <name>substrate</name>
    </ligand>
</feature>
<feature type="binding site" evidence="1">
    <location>
        <position position="90"/>
    </location>
    <ligand>
        <name>substrate</name>
    </ligand>
</feature>
<feature type="binding site" evidence="1">
    <location>
        <position position="167"/>
    </location>
    <ligand>
        <name>substrate</name>
    </ligand>
</feature>
<feature type="binding site" evidence="1">
    <location>
        <position position="222"/>
    </location>
    <ligand>
        <name>substrate</name>
    </ligand>
</feature>
<feature type="binding site" evidence="1">
    <location>
        <position position="355"/>
    </location>
    <ligand>
        <name>substrate</name>
    </ligand>
</feature>
<feature type="site" description="Transition state stabilizer" evidence="1">
    <location>
        <position position="90"/>
    </location>
</feature>
<organism>
    <name type="scientific">Psychrobacter arcticus (strain DSM 17307 / VKM B-2377 / 273-4)</name>
    <dbReference type="NCBI Taxonomy" id="259536"/>
    <lineage>
        <taxon>Bacteria</taxon>
        <taxon>Pseudomonadati</taxon>
        <taxon>Pseudomonadota</taxon>
        <taxon>Gammaproteobacteria</taxon>
        <taxon>Moraxellales</taxon>
        <taxon>Moraxellaceae</taxon>
        <taxon>Psychrobacter</taxon>
    </lineage>
</organism>
<protein>
    <recommendedName>
        <fullName evidence="1">Uroporphyrinogen decarboxylase</fullName>
        <shortName evidence="1">UPD</shortName>
        <shortName evidence="1">URO-D</shortName>
        <ecNumber evidence="1">4.1.1.37</ecNumber>
    </recommendedName>
</protein>
<proteinExistence type="inferred from homology"/>